<accession>Q8N123</accession>
<accession>B2R9F9</accession>
<accession>D3DTE7</accession>
<accession>Q96RS3</accession>
<protein>
    <recommendedName>
        <fullName>CPX chromosomal region candidate gene 1 protein</fullName>
    </recommendedName>
    <alternativeName>
        <fullName>Cancer/testis antigen 77</fullName>
        <shortName>CT77</shortName>
    </alternativeName>
</protein>
<feature type="chain" id="PRO_0000305343" description="CPX chromosomal region candidate gene 1 protein">
    <location>
        <begin position="1"/>
        <end position="301"/>
    </location>
</feature>
<feature type="region of interest" description="Disordered" evidence="1">
    <location>
        <begin position="1"/>
        <end position="77"/>
    </location>
</feature>
<feature type="compositionally biased region" description="Polar residues" evidence="1">
    <location>
        <begin position="44"/>
        <end position="60"/>
    </location>
</feature>
<feature type="sequence variant" id="VAR_035218" description="In dbSNP:rs5940915." evidence="2 3 4 5">
    <original>Y</original>
    <variation>S</variation>
    <location>
        <position position="3"/>
    </location>
</feature>
<feature type="sequence variant" id="VAR_035219" description="In dbSNP:rs5984611." evidence="2">
    <original>R</original>
    <variation>H</variation>
    <location>
        <position position="131"/>
    </location>
</feature>
<keyword id="KW-1185">Reference proteome</keyword>
<sequence>MSYPTKEGSDTAGNAHKNSENEPPNDCSTDIESPSADPNMIYQVETNPINREPGTATSQEDVVPQAAENSELETEIQKDQREEDLKEELLLLQTPIPRKLVSHKPLNDRSRSHSGKVEMKANNFPINHKTRFRLSTSWRVPFINSHEIRSMILHLLCDRYFSQAAGCQNTMWVKRKYIACLYHPNSFTHHERAITFRRPSRVHYYRPLTERMTSGKFCKSTDTKGKCRFRAIVRSVLFVSQIQIESIFNIKGFVDILTYIHTMNVMITNTNNGWKYFCPICGRLFNTYSELRQHSCSSSGN</sequence>
<organism>
    <name type="scientific">Homo sapiens</name>
    <name type="common">Human</name>
    <dbReference type="NCBI Taxonomy" id="9606"/>
    <lineage>
        <taxon>Eukaryota</taxon>
        <taxon>Metazoa</taxon>
        <taxon>Chordata</taxon>
        <taxon>Craniata</taxon>
        <taxon>Vertebrata</taxon>
        <taxon>Euteleostomi</taxon>
        <taxon>Mammalia</taxon>
        <taxon>Eutheria</taxon>
        <taxon>Euarchontoglires</taxon>
        <taxon>Primates</taxon>
        <taxon>Haplorrhini</taxon>
        <taxon>Catarrhini</taxon>
        <taxon>Hominidae</taxon>
        <taxon>Homo</taxon>
    </lineage>
</organism>
<proteinExistence type="evidence at transcript level"/>
<reference key="1">
    <citation type="journal article" date="2001" name="Hum. Genet.">
        <title>Physical and transcriptional mapping of the X-linked cleft palate and ankyloglossia (CPX) critical region.</title>
        <authorList>
            <person name="Braybrook C."/>
            <person name="Warry G."/>
            <person name="Howell G."/>
            <person name="Mandryko V."/>
            <person name="Arnason A."/>
            <person name="Bjornsson A."/>
            <person name="Ross M.T."/>
            <person name="Moore G.E."/>
            <person name="Stanier P."/>
        </authorList>
    </citation>
    <scope>NUCLEOTIDE SEQUENCE [MRNA]</scope>
    <scope>VARIANTS SER-3 AND HIS-131</scope>
    <scope>TISSUE SPECIFICITY</scope>
</reference>
<reference key="2">
    <citation type="journal article" date="2004" name="Nat. Genet.">
        <title>Complete sequencing and characterization of 21,243 full-length human cDNAs.</title>
        <authorList>
            <person name="Ota T."/>
            <person name="Suzuki Y."/>
            <person name="Nishikawa T."/>
            <person name="Otsuki T."/>
            <person name="Sugiyama T."/>
            <person name="Irie R."/>
            <person name="Wakamatsu A."/>
            <person name="Hayashi K."/>
            <person name="Sato H."/>
            <person name="Nagai K."/>
            <person name="Kimura K."/>
            <person name="Makita H."/>
            <person name="Sekine M."/>
            <person name="Obayashi M."/>
            <person name="Nishi T."/>
            <person name="Shibahara T."/>
            <person name="Tanaka T."/>
            <person name="Ishii S."/>
            <person name="Yamamoto J."/>
            <person name="Saito K."/>
            <person name="Kawai Y."/>
            <person name="Isono Y."/>
            <person name="Nakamura Y."/>
            <person name="Nagahari K."/>
            <person name="Murakami K."/>
            <person name="Yasuda T."/>
            <person name="Iwayanagi T."/>
            <person name="Wagatsuma M."/>
            <person name="Shiratori A."/>
            <person name="Sudo H."/>
            <person name="Hosoiri T."/>
            <person name="Kaku Y."/>
            <person name="Kodaira H."/>
            <person name="Kondo H."/>
            <person name="Sugawara M."/>
            <person name="Takahashi M."/>
            <person name="Kanda K."/>
            <person name="Yokoi T."/>
            <person name="Furuya T."/>
            <person name="Kikkawa E."/>
            <person name="Omura Y."/>
            <person name="Abe K."/>
            <person name="Kamihara K."/>
            <person name="Katsuta N."/>
            <person name="Sato K."/>
            <person name="Tanikawa M."/>
            <person name="Yamazaki M."/>
            <person name="Ninomiya K."/>
            <person name="Ishibashi T."/>
            <person name="Yamashita H."/>
            <person name="Murakawa K."/>
            <person name="Fujimori K."/>
            <person name="Tanai H."/>
            <person name="Kimata M."/>
            <person name="Watanabe M."/>
            <person name="Hiraoka S."/>
            <person name="Chiba Y."/>
            <person name="Ishida S."/>
            <person name="Ono Y."/>
            <person name="Takiguchi S."/>
            <person name="Watanabe S."/>
            <person name="Yosida M."/>
            <person name="Hotuta T."/>
            <person name="Kusano J."/>
            <person name="Kanehori K."/>
            <person name="Takahashi-Fujii A."/>
            <person name="Hara H."/>
            <person name="Tanase T.-O."/>
            <person name="Nomura Y."/>
            <person name="Togiya S."/>
            <person name="Komai F."/>
            <person name="Hara R."/>
            <person name="Takeuchi K."/>
            <person name="Arita M."/>
            <person name="Imose N."/>
            <person name="Musashino K."/>
            <person name="Yuuki H."/>
            <person name="Oshima A."/>
            <person name="Sasaki N."/>
            <person name="Aotsuka S."/>
            <person name="Yoshikawa Y."/>
            <person name="Matsunawa H."/>
            <person name="Ichihara T."/>
            <person name="Shiohata N."/>
            <person name="Sano S."/>
            <person name="Moriya S."/>
            <person name="Momiyama H."/>
            <person name="Satoh N."/>
            <person name="Takami S."/>
            <person name="Terashima Y."/>
            <person name="Suzuki O."/>
            <person name="Nakagawa S."/>
            <person name="Senoh A."/>
            <person name="Mizoguchi H."/>
            <person name="Goto Y."/>
            <person name="Shimizu F."/>
            <person name="Wakebe H."/>
            <person name="Hishigaki H."/>
            <person name="Watanabe T."/>
            <person name="Sugiyama A."/>
            <person name="Takemoto M."/>
            <person name="Kawakami B."/>
            <person name="Yamazaki M."/>
            <person name="Watanabe K."/>
            <person name="Kumagai A."/>
            <person name="Itakura S."/>
            <person name="Fukuzumi Y."/>
            <person name="Fujimori Y."/>
            <person name="Komiyama M."/>
            <person name="Tashiro H."/>
            <person name="Tanigami A."/>
            <person name="Fujiwara T."/>
            <person name="Ono T."/>
            <person name="Yamada K."/>
            <person name="Fujii Y."/>
            <person name="Ozaki K."/>
            <person name="Hirao M."/>
            <person name="Ohmori Y."/>
            <person name="Kawabata A."/>
            <person name="Hikiji T."/>
            <person name="Kobatake N."/>
            <person name="Inagaki H."/>
            <person name="Ikema Y."/>
            <person name="Okamoto S."/>
            <person name="Okitani R."/>
            <person name="Kawakami T."/>
            <person name="Noguchi S."/>
            <person name="Itoh T."/>
            <person name="Shigeta K."/>
            <person name="Senba T."/>
            <person name="Matsumura K."/>
            <person name="Nakajima Y."/>
            <person name="Mizuno T."/>
            <person name="Morinaga M."/>
            <person name="Sasaki M."/>
            <person name="Togashi T."/>
            <person name="Oyama M."/>
            <person name="Hata H."/>
            <person name="Watanabe M."/>
            <person name="Komatsu T."/>
            <person name="Mizushima-Sugano J."/>
            <person name="Satoh T."/>
            <person name="Shirai Y."/>
            <person name="Takahashi Y."/>
            <person name="Nakagawa K."/>
            <person name="Okumura K."/>
            <person name="Nagase T."/>
            <person name="Nomura N."/>
            <person name="Kikuchi H."/>
            <person name="Masuho Y."/>
            <person name="Yamashita R."/>
            <person name="Nakai K."/>
            <person name="Yada T."/>
            <person name="Nakamura Y."/>
            <person name="Ohara O."/>
            <person name="Isogai T."/>
            <person name="Sugano S."/>
        </authorList>
    </citation>
    <scope>NUCLEOTIDE SEQUENCE [LARGE SCALE MRNA]</scope>
    <scope>VARIANT SER-3</scope>
    <source>
        <tissue>Testis</tissue>
    </source>
</reference>
<reference key="3">
    <citation type="journal article" date="2005" name="Nature">
        <title>The DNA sequence of the human X chromosome.</title>
        <authorList>
            <person name="Ross M.T."/>
            <person name="Grafham D.V."/>
            <person name="Coffey A.J."/>
            <person name="Scherer S."/>
            <person name="McLay K."/>
            <person name="Muzny D."/>
            <person name="Platzer M."/>
            <person name="Howell G.R."/>
            <person name="Burrows C."/>
            <person name="Bird C.P."/>
            <person name="Frankish A."/>
            <person name="Lovell F.L."/>
            <person name="Howe K.L."/>
            <person name="Ashurst J.L."/>
            <person name="Fulton R.S."/>
            <person name="Sudbrak R."/>
            <person name="Wen G."/>
            <person name="Jones M.C."/>
            <person name="Hurles M.E."/>
            <person name="Andrews T.D."/>
            <person name="Scott C.E."/>
            <person name="Searle S."/>
            <person name="Ramser J."/>
            <person name="Whittaker A."/>
            <person name="Deadman R."/>
            <person name="Carter N.P."/>
            <person name="Hunt S.E."/>
            <person name="Chen R."/>
            <person name="Cree A."/>
            <person name="Gunaratne P."/>
            <person name="Havlak P."/>
            <person name="Hodgson A."/>
            <person name="Metzker M.L."/>
            <person name="Richards S."/>
            <person name="Scott G."/>
            <person name="Steffen D."/>
            <person name="Sodergren E."/>
            <person name="Wheeler D.A."/>
            <person name="Worley K.C."/>
            <person name="Ainscough R."/>
            <person name="Ambrose K.D."/>
            <person name="Ansari-Lari M.A."/>
            <person name="Aradhya S."/>
            <person name="Ashwell R.I."/>
            <person name="Babbage A.K."/>
            <person name="Bagguley C.L."/>
            <person name="Ballabio A."/>
            <person name="Banerjee R."/>
            <person name="Barker G.E."/>
            <person name="Barlow K.F."/>
            <person name="Barrett I.P."/>
            <person name="Bates K.N."/>
            <person name="Beare D.M."/>
            <person name="Beasley H."/>
            <person name="Beasley O."/>
            <person name="Beck A."/>
            <person name="Bethel G."/>
            <person name="Blechschmidt K."/>
            <person name="Brady N."/>
            <person name="Bray-Allen S."/>
            <person name="Bridgeman A.M."/>
            <person name="Brown A.J."/>
            <person name="Brown M.J."/>
            <person name="Bonnin D."/>
            <person name="Bruford E.A."/>
            <person name="Buhay C."/>
            <person name="Burch P."/>
            <person name="Burford D."/>
            <person name="Burgess J."/>
            <person name="Burrill W."/>
            <person name="Burton J."/>
            <person name="Bye J.M."/>
            <person name="Carder C."/>
            <person name="Carrel L."/>
            <person name="Chako J."/>
            <person name="Chapman J.C."/>
            <person name="Chavez D."/>
            <person name="Chen E."/>
            <person name="Chen G."/>
            <person name="Chen Y."/>
            <person name="Chen Z."/>
            <person name="Chinault C."/>
            <person name="Ciccodicola A."/>
            <person name="Clark S.Y."/>
            <person name="Clarke G."/>
            <person name="Clee C.M."/>
            <person name="Clegg S."/>
            <person name="Clerc-Blankenburg K."/>
            <person name="Clifford K."/>
            <person name="Cobley V."/>
            <person name="Cole C.G."/>
            <person name="Conquer J.S."/>
            <person name="Corby N."/>
            <person name="Connor R.E."/>
            <person name="David R."/>
            <person name="Davies J."/>
            <person name="Davis C."/>
            <person name="Davis J."/>
            <person name="Delgado O."/>
            <person name="Deshazo D."/>
            <person name="Dhami P."/>
            <person name="Ding Y."/>
            <person name="Dinh H."/>
            <person name="Dodsworth S."/>
            <person name="Draper H."/>
            <person name="Dugan-Rocha S."/>
            <person name="Dunham A."/>
            <person name="Dunn M."/>
            <person name="Durbin K.J."/>
            <person name="Dutta I."/>
            <person name="Eades T."/>
            <person name="Ellwood M."/>
            <person name="Emery-Cohen A."/>
            <person name="Errington H."/>
            <person name="Evans K.L."/>
            <person name="Faulkner L."/>
            <person name="Francis F."/>
            <person name="Frankland J."/>
            <person name="Fraser A.E."/>
            <person name="Galgoczy P."/>
            <person name="Gilbert J."/>
            <person name="Gill R."/>
            <person name="Gloeckner G."/>
            <person name="Gregory S.G."/>
            <person name="Gribble S."/>
            <person name="Griffiths C."/>
            <person name="Grocock R."/>
            <person name="Gu Y."/>
            <person name="Gwilliam R."/>
            <person name="Hamilton C."/>
            <person name="Hart E.A."/>
            <person name="Hawes A."/>
            <person name="Heath P.D."/>
            <person name="Heitmann K."/>
            <person name="Hennig S."/>
            <person name="Hernandez J."/>
            <person name="Hinzmann B."/>
            <person name="Ho S."/>
            <person name="Hoffs M."/>
            <person name="Howden P.J."/>
            <person name="Huckle E.J."/>
            <person name="Hume J."/>
            <person name="Hunt P.J."/>
            <person name="Hunt A.R."/>
            <person name="Isherwood J."/>
            <person name="Jacob L."/>
            <person name="Johnson D."/>
            <person name="Jones S."/>
            <person name="de Jong P.J."/>
            <person name="Joseph S.S."/>
            <person name="Keenan S."/>
            <person name="Kelly S."/>
            <person name="Kershaw J.K."/>
            <person name="Khan Z."/>
            <person name="Kioschis P."/>
            <person name="Klages S."/>
            <person name="Knights A.J."/>
            <person name="Kosiura A."/>
            <person name="Kovar-Smith C."/>
            <person name="Laird G.K."/>
            <person name="Langford C."/>
            <person name="Lawlor S."/>
            <person name="Leversha M."/>
            <person name="Lewis L."/>
            <person name="Liu W."/>
            <person name="Lloyd C."/>
            <person name="Lloyd D.M."/>
            <person name="Loulseged H."/>
            <person name="Loveland J.E."/>
            <person name="Lovell J.D."/>
            <person name="Lozado R."/>
            <person name="Lu J."/>
            <person name="Lyne R."/>
            <person name="Ma J."/>
            <person name="Maheshwari M."/>
            <person name="Matthews L.H."/>
            <person name="McDowall J."/>
            <person name="McLaren S."/>
            <person name="McMurray A."/>
            <person name="Meidl P."/>
            <person name="Meitinger T."/>
            <person name="Milne S."/>
            <person name="Miner G."/>
            <person name="Mistry S.L."/>
            <person name="Morgan M."/>
            <person name="Morris S."/>
            <person name="Mueller I."/>
            <person name="Mullikin J.C."/>
            <person name="Nguyen N."/>
            <person name="Nordsiek G."/>
            <person name="Nyakatura G."/>
            <person name="O'dell C.N."/>
            <person name="Okwuonu G."/>
            <person name="Palmer S."/>
            <person name="Pandian R."/>
            <person name="Parker D."/>
            <person name="Parrish J."/>
            <person name="Pasternak S."/>
            <person name="Patel D."/>
            <person name="Pearce A.V."/>
            <person name="Pearson D.M."/>
            <person name="Pelan S.E."/>
            <person name="Perez L."/>
            <person name="Porter K.M."/>
            <person name="Ramsey Y."/>
            <person name="Reichwald K."/>
            <person name="Rhodes S."/>
            <person name="Ridler K.A."/>
            <person name="Schlessinger D."/>
            <person name="Schueler M.G."/>
            <person name="Sehra H.K."/>
            <person name="Shaw-Smith C."/>
            <person name="Shen H."/>
            <person name="Sheridan E.M."/>
            <person name="Shownkeen R."/>
            <person name="Skuce C.D."/>
            <person name="Smith M.L."/>
            <person name="Sotheran E.C."/>
            <person name="Steingruber H.E."/>
            <person name="Steward C.A."/>
            <person name="Storey R."/>
            <person name="Swann R.M."/>
            <person name="Swarbreck D."/>
            <person name="Tabor P.E."/>
            <person name="Taudien S."/>
            <person name="Taylor T."/>
            <person name="Teague B."/>
            <person name="Thomas K."/>
            <person name="Thorpe A."/>
            <person name="Timms K."/>
            <person name="Tracey A."/>
            <person name="Trevanion S."/>
            <person name="Tromans A.C."/>
            <person name="d'Urso M."/>
            <person name="Verduzco D."/>
            <person name="Villasana D."/>
            <person name="Waldron L."/>
            <person name="Wall M."/>
            <person name="Wang Q."/>
            <person name="Warren J."/>
            <person name="Warry G.L."/>
            <person name="Wei X."/>
            <person name="West A."/>
            <person name="Whitehead S.L."/>
            <person name="Whiteley M.N."/>
            <person name="Wilkinson J.E."/>
            <person name="Willey D.L."/>
            <person name="Williams G."/>
            <person name="Williams L."/>
            <person name="Williamson A."/>
            <person name="Williamson H."/>
            <person name="Wilming L."/>
            <person name="Woodmansey R.L."/>
            <person name="Wray P.W."/>
            <person name="Yen J."/>
            <person name="Zhang J."/>
            <person name="Zhou J."/>
            <person name="Zoghbi H."/>
            <person name="Zorilla S."/>
            <person name="Buck D."/>
            <person name="Reinhardt R."/>
            <person name="Poustka A."/>
            <person name="Rosenthal A."/>
            <person name="Lehrach H."/>
            <person name="Meindl A."/>
            <person name="Minx P.J."/>
            <person name="Hillier L.W."/>
            <person name="Willard H.F."/>
            <person name="Wilson R.K."/>
            <person name="Waterston R.H."/>
            <person name="Rice C.M."/>
            <person name="Vaudin M."/>
            <person name="Coulson A."/>
            <person name="Nelson D.L."/>
            <person name="Weinstock G."/>
            <person name="Sulston J.E."/>
            <person name="Durbin R.M."/>
            <person name="Hubbard T."/>
            <person name="Gibbs R.A."/>
            <person name="Beck S."/>
            <person name="Rogers J."/>
            <person name="Bentley D.R."/>
        </authorList>
    </citation>
    <scope>NUCLEOTIDE SEQUENCE [LARGE SCALE GENOMIC DNA]</scope>
</reference>
<reference key="4">
    <citation type="submission" date="2005-09" db="EMBL/GenBank/DDBJ databases">
        <authorList>
            <person name="Mural R.J."/>
            <person name="Istrail S."/>
            <person name="Sutton G.G."/>
            <person name="Florea L."/>
            <person name="Halpern A.L."/>
            <person name="Mobarry C.M."/>
            <person name="Lippert R."/>
            <person name="Walenz B."/>
            <person name="Shatkay H."/>
            <person name="Dew I."/>
            <person name="Miller J.R."/>
            <person name="Flanigan M.J."/>
            <person name="Edwards N.J."/>
            <person name="Bolanos R."/>
            <person name="Fasulo D."/>
            <person name="Halldorsson B.V."/>
            <person name="Hannenhalli S."/>
            <person name="Turner R."/>
            <person name="Yooseph S."/>
            <person name="Lu F."/>
            <person name="Nusskern D.R."/>
            <person name="Shue B.C."/>
            <person name="Zheng X.H."/>
            <person name="Zhong F."/>
            <person name="Delcher A.L."/>
            <person name="Huson D.H."/>
            <person name="Kravitz S.A."/>
            <person name="Mouchard L."/>
            <person name="Reinert K."/>
            <person name="Remington K.A."/>
            <person name="Clark A.G."/>
            <person name="Waterman M.S."/>
            <person name="Eichler E.E."/>
            <person name="Adams M.D."/>
            <person name="Hunkapiller M.W."/>
            <person name="Myers E.W."/>
            <person name="Venter J.C."/>
        </authorList>
    </citation>
    <scope>NUCLEOTIDE SEQUENCE [LARGE SCALE GENOMIC DNA]</scope>
    <scope>VARIANT SER-3</scope>
</reference>
<reference key="5">
    <citation type="journal article" date="2004" name="Genome Res.">
        <title>The status, quality, and expansion of the NIH full-length cDNA project: the Mammalian Gene Collection (MGC).</title>
        <authorList>
            <consortium name="The MGC Project Team"/>
        </authorList>
    </citation>
    <scope>NUCLEOTIDE SEQUENCE [LARGE SCALE MRNA]</scope>
    <scope>VARIANT SER-3</scope>
    <source>
        <tissue>Testis</tissue>
    </source>
</reference>
<evidence type="ECO:0000256" key="1">
    <source>
        <dbReference type="SAM" id="MobiDB-lite"/>
    </source>
</evidence>
<evidence type="ECO:0000269" key="2">
    <source>
    </source>
</evidence>
<evidence type="ECO:0000269" key="3">
    <source>
    </source>
</evidence>
<evidence type="ECO:0000269" key="4">
    <source>
    </source>
</evidence>
<evidence type="ECO:0000269" key="5">
    <source ref="4"/>
</evidence>
<comment type="tissue specificity">
    <text evidence="2">Expressed in a variety of fetal tissues.</text>
</comment>
<name>CPXCR_HUMAN</name>
<gene>
    <name type="primary">CPXCR1</name>
</gene>
<dbReference type="EMBL" id="AF284767">
    <property type="protein sequence ID" value="AAK69720.1"/>
    <property type="molecule type" value="mRNA"/>
</dbReference>
<dbReference type="EMBL" id="AK098646">
    <property type="protein sequence ID" value="BAC05363.1"/>
    <property type="molecule type" value="mRNA"/>
</dbReference>
<dbReference type="EMBL" id="AK313768">
    <property type="protein sequence ID" value="BAG36506.1"/>
    <property type="molecule type" value="mRNA"/>
</dbReference>
<dbReference type="EMBL" id="AL031116">
    <property type="status" value="NOT_ANNOTATED_CDS"/>
    <property type="molecule type" value="Genomic_DNA"/>
</dbReference>
<dbReference type="EMBL" id="CH471104">
    <property type="protein sequence ID" value="EAW98549.1"/>
    <property type="molecule type" value="Genomic_DNA"/>
</dbReference>
<dbReference type="EMBL" id="CH471104">
    <property type="protein sequence ID" value="EAW98550.1"/>
    <property type="molecule type" value="Genomic_DNA"/>
</dbReference>
<dbReference type="EMBL" id="CH471104">
    <property type="protein sequence ID" value="EAW98551.1"/>
    <property type="molecule type" value="Genomic_DNA"/>
</dbReference>
<dbReference type="EMBL" id="BC027614">
    <property type="protein sequence ID" value="AAH27614.1"/>
    <property type="molecule type" value="mRNA"/>
</dbReference>
<dbReference type="CCDS" id="CCDS14458.1"/>
<dbReference type="RefSeq" id="NP_001171700.2">
    <property type="nucleotide sequence ID" value="NM_001184771.2"/>
</dbReference>
<dbReference type="RefSeq" id="NP_149037.4">
    <property type="nucleotide sequence ID" value="NM_033048.5"/>
</dbReference>
<dbReference type="BioGRID" id="119738">
    <property type="interactions" value="7"/>
</dbReference>
<dbReference type="IntAct" id="Q8N123">
    <property type="interactions" value="7"/>
</dbReference>
<dbReference type="MINT" id="Q8N123"/>
<dbReference type="STRING" id="9606.ENSP00000276127"/>
<dbReference type="PhosphoSitePlus" id="Q8N123"/>
<dbReference type="BioMuta" id="CPXCR1"/>
<dbReference type="DMDM" id="158706462"/>
<dbReference type="PaxDb" id="9606-ENSP00000276127"/>
<dbReference type="PeptideAtlas" id="Q8N123"/>
<dbReference type="ProteomicsDB" id="71523"/>
<dbReference type="Antibodypedia" id="14397">
    <property type="antibodies" value="137 antibodies from 27 providers"/>
</dbReference>
<dbReference type="DNASU" id="53336"/>
<dbReference type="Ensembl" id="ENST00000276127.9">
    <property type="protein sequence ID" value="ENSP00000276127.4"/>
    <property type="gene ID" value="ENSG00000147183.10"/>
</dbReference>
<dbReference type="Ensembl" id="ENST00000373111.5">
    <property type="protein sequence ID" value="ENSP00000362203.1"/>
    <property type="gene ID" value="ENSG00000147183.10"/>
</dbReference>
<dbReference type="Ensembl" id="ENST00000614120.1">
    <property type="protein sequence ID" value="ENSP00000484986.1"/>
    <property type="gene ID" value="ENSG00000147183.10"/>
</dbReference>
<dbReference type="GeneID" id="53336"/>
<dbReference type="KEGG" id="hsa:53336"/>
<dbReference type="MANE-Select" id="ENST00000276127.9">
    <property type="protein sequence ID" value="ENSP00000276127.4"/>
    <property type="RefSeq nucleotide sequence ID" value="NM_033048.6"/>
    <property type="RefSeq protein sequence ID" value="NP_149037.5"/>
</dbReference>
<dbReference type="UCSC" id="uc004efc.5">
    <property type="organism name" value="human"/>
</dbReference>
<dbReference type="AGR" id="HGNC:2332"/>
<dbReference type="CTD" id="53336"/>
<dbReference type="DisGeNET" id="53336"/>
<dbReference type="GeneCards" id="CPXCR1"/>
<dbReference type="HGNC" id="HGNC:2332">
    <property type="gene designation" value="CPXCR1"/>
</dbReference>
<dbReference type="HPA" id="ENSG00000147183">
    <property type="expression patterns" value="Tissue enriched (testis)"/>
</dbReference>
<dbReference type="MIM" id="301055">
    <property type="type" value="gene"/>
</dbReference>
<dbReference type="neXtProt" id="NX_Q8N123"/>
<dbReference type="OpenTargets" id="ENSG00000147183"/>
<dbReference type="PharmGKB" id="PA26852"/>
<dbReference type="VEuPathDB" id="HostDB:ENSG00000147183"/>
<dbReference type="eggNOG" id="ENOG502TDNH">
    <property type="taxonomic scope" value="Eukaryota"/>
</dbReference>
<dbReference type="GeneTree" id="ENSGT00390000003732"/>
<dbReference type="HOGENOM" id="CLU_924280_0_0_1"/>
<dbReference type="InParanoid" id="Q8N123"/>
<dbReference type="OMA" id="IPIPRKW"/>
<dbReference type="OrthoDB" id="9833136at2759"/>
<dbReference type="PAN-GO" id="Q8N123">
    <property type="GO annotations" value="0 GO annotations based on evolutionary models"/>
</dbReference>
<dbReference type="PhylomeDB" id="Q8N123"/>
<dbReference type="TreeFam" id="TF341435"/>
<dbReference type="PathwayCommons" id="Q8N123"/>
<dbReference type="SignaLink" id="Q8N123"/>
<dbReference type="BioGRID-ORCS" id="53336">
    <property type="hits" value="9 hits in 760 CRISPR screens"/>
</dbReference>
<dbReference type="GenomeRNAi" id="53336"/>
<dbReference type="Pharos" id="Q8N123">
    <property type="development level" value="Tdark"/>
</dbReference>
<dbReference type="PRO" id="PR:Q8N123"/>
<dbReference type="Proteomes" id="UP000005640">
    <property type="component" value="Chromosome X"/>
</dbReference>
<dbReference type="RNAct" id="Q8N123">
    <property type="molecule type" value="protein"/>
</dbReference>
<dbReference type="Bgee" id="ENSG00000147183">
    <property type="expression patterns" value="Expressed in sperm and 17 other cell types or tissues"/>
</dbReference>
<dbReference type="InterPro" id="IPR013087">
    <property type="entry name" value="Znf_C2H2_type"/>
</dbReference>
<dbReference type="PROSITE" id="PS50157">
    <property type="entry name" value="ZINC_FINGER_C2H2_2"/>
    <property type="match status" value="1"/>
</dbReference>